<organism>
    <name type="scientific">Streptococcus agalactiae serotype Ia (strain ATCC 27591 / A909 / CDC SS700)</name>
    <dbReference type="NCBI Taxonomy" id="205921"/>
    <lineage>
        <taxon>Bacteria</taxon>
        <taxon>Bacillati</taxon>
        <taxon>Bacillota</taxon>
        <taxon>Bacilli</taxon>
        <taxon>Lactobacillales</taxon>
        <taxon>Streptococcaceae</taxon>
        <taxon>Streptococcus</taxon>
    </lineage>
</organism>
<comment type="function">
    <text evidence="1">Modulates transcription in response to changes in cellular NADH/NAD(+) redox state.</text>
</comment>
<comment type="subunit">
    <text evidence="1">Homodimer.</text>
</comment>
<comment type="subcellular location">
    <subcellularLocation>
        <location evidence="1">Cytoplasm</location>
    </subcellularLocation>
</comment>
<comment type="similarity">
    <text evidence="1">Belongs to the transcriptional regulatory Rex family.</text>
</comment>
<protein>
    <recommendedName>
        <fullName evidence="1">Redox-sensing transcriptional repressor Rex</fullName>
    </recommendedName>
</protein>
<feature type="chain" id="PRO_1000065419" description="Redox-sensing transcriptional repressor Rex">
    <location>
        <begin position="1"/>
        <end position="210"/>
    </location>
</feature>
<feature type="DNA-binding region" description="H-T-H motif" evidence="1">
    <location>
        <begin position="15"/>
        <end position="54"/>
    </location>
</feature>
<feature type="binding site" evidence="1">
    <location>
        <begin position="89"/>
        <end position="94"/>
    </location>
    <ligand>
        <name>NAD(+)</name>
        <dbReference type="ChEBI" id="CHEBI:57540"/>
    </ligand>
</feature>
<keyword id="KW-0963">Cytoplasm</keyword>
<keyword id="KW-0238">DNA-binding</keyword>
<keyword id="KW-0520">NAD</keyword>
<keyword id="KW-0678">Repressor</keyword>
<keyword id="KW-0804">Transcription</keyword>
<keyword id="KW-0805">Transcription regulation</keyword>
<gene>
    <name evidence="1" type="primary">rex</name>
    <name type="ordered locus">SAK_1185</name>
</gene>
<dbReference type="EMBL" id="CP000114">
    <property type="protein sequence ID" value="ABA44819.1"/>
    <property type="molecule type" value="Genomic_DNA"/>
</dbReference>
<dbReference type="SMR" id="Q3K0Z7"/>
<dbReference type="KEGG" id="sak:SAK_1185"/>
<dbReference type="HOGENOM" id="CLU_061534_1_1_9"/>
<dbReference type="GO" id="GO:0005737">
    <property type="term" value="C:cytoplasm"/>
    <property type="evidence" value="ECO:0007669"/>
    <property type="project" value="UniProtKB-SubCell"/>
</dbReference>
<dbReference type="GO" id="GO:0003677">
    <property type="term" value="F:DNA binding"/>
    <property type="evidence" value="ECO:0007669"/>
    <property type="project" value="UniProtKB-UniRule"/>
</dbReference>
<dbReference type="GO" id="GO:0003700">
    <property type="term" value="F:DNA-binding transcription factor activity"/>
    <property type="evidence" value="ECO:0007669"/>
    <property type="project" value="UniProtKB-UniRule"/>
</dbReference>
<dbReference type="GO" id="GO:0045892">
    <property type="term" value="P:negative regulation of DNA-templated transcription"/>
    <property type="evidence" value="ECO:0007669"/>
    <property type="project" value="InterPro"/>
</dbReference>
<dbReference type="GO" id="GO:0051775">
    <property type="term" value="P:response to redox state"/>
    <property type="evidence" value="ECO:0007669"/>
    <property type="project" value="InterPro"/>
</dbReference>
<dbReference type="Gene3D" id="3.40.50.720">
    <property type="entry name" value="NAD(P)-binding Rossmann-like Domain"/>
    <property type="match status" value="1"/>
</dbReference>
<dbReference type="Gene3D" id="1.10.10.10">
    <property type="entry name" value="Winged helix-like DNA-binding domain superfamily/Winged helix DNA-binding domain"/>
    <property type="match status" value="1"/>
</dbReference>
<dbReference type="HAMAP" id="MF_01131">
    <property type="entry name" value="Rex"/>
    <property type="match status" value="1"/>
</dbReference>
<dbReference type="InterPro" id="IPR003781">
    <property type="entry name" value="CoA-bd"/>
</dbReference>
<dbReference type="InterPro" id="IPR036291">
    <property type="entry name" value="NAD(P)-bd_dom_sf"/>
</dbReference>
<dbReference type="InterPro" id="IPR009718">
    <property type="entry name" value="Rex_DNA-bd_C_dom"/>
</dbReference>
<dbReference type="InterPro" id="IPR022876">
    <property type="entry name" value="Tscrpt_rep_Rex"/>
</dbReference>
<dbReference type="InterPro" id="IPR036388">
    <property type="entry name" value="WH-like_DNA-bd_sf"/>
</dbReference>
<dbReference type="InterPro" id="IPR036390">
    <property type="entry name" value="WH_DNA-bd_sf"/>
</dbReference>
<dbReference type="NCBIfam" id="NF003988">
    <property type="entry name" value="PRK05472.1-1"/>
    <property type="match status" value="1"/>
</dbReference>
<dbReference type="NCBIfam" id="NF003989">
    <property type="entry name" value="PRK05472.1-3"/>
    <property type="match status" value="1"/>
</dbReference>
<dbReference type="NCBIfam" id="NF003991">
    <property type="entry name" value="PRK05472.1-5"/>
    <property type="match status" value="1"/>
</dbReference>
<dbReference type="NCBIfam" id="NF003994">
    <property type="entry name" value="PRK05472.2-3"/>
    <property type="match status" value="1"/>
</dbReference>
<dbReference type="NCBIfam" id="NF003995">
    <property type="entry name" value="PRK05472.2-4"/>
    <property type="match status" value="1"/>
</dbReference>
<dbReference type="NCBIfam" id="NF003996">
    <property type="entry name" value="PRK05472.2-5"/>
    <property type="match status" value="1"/>
</dbReference>
<dbReference type="PANTHER" id="PTHR35786">
    <property type="entry name" value="REDOX-SENSING TRANSCRIPTIONAL REPRESSOR REX"/>
    <property type="match status" value="1"/>
</dbReference>
<dbReference type="PANTHER" id="PTHR35786:SF1">
    <property type="entry name" value="REDOX-SENSING TRANSCRIPTIONAL REPRESSOR REX 1"/>
    <property type="match status" value="1"/>
</dbReference>
<dbReference type="Pfam" id="PF02629">
    <property type="entry name" value="CoA_binding"/>
    <property type="match status" value="1"/>
</dbReference>
<dbReference type="Pfam" id="PF06971">
    <property type="entry name" value="Put_DNA-bind_N"/>
    <property type="match status" value="1"/>
</dbReference>
<dbReference type="SMART" id="SM00881">
    <property type="entry name" value="CoA_binding"/>
    <property type="match status" value="1"/>
</dbReference>
<dbReference type="SUPFAM" id="SSF51735">
    <property type="entry name" value="NAD(P)-binding Rossmann-fold domains"/>
    <property type="match status" value="1"/>
</dbReference>
<dbReference type="SUPFAM" id="SSF46785">
    <property type="entry name" value="Winged helix' DNA-binding domain"/>
    <property type="match status" value="1"/>
</dbReference>
<name>REX_STRA1</name>
<proteinExistence type="inferred from homology"/>
<evidence type="ECO:0000255" key="1">
    <source>
        <dbReference type="HAMAP-Rule" id="MF_01131"/>
    </source>
</evidence>
<reference key="1">
    <citation type="journal article" date="2005" name="Proc. Natl. Acad. Sci. U.S.A.">
        <title>Genome analysis of multiple pathogenic isolates of Streptococcus agalactiae: implications for the microbial 'pan-genome'.</title>
        <authorList>
            <person name="Tettelin H."/>
            <person name="Masignani V."/>
            <person name="Cieslewicz M.J."/>
            <person name="Donati C."/>
            <person name="Medini D."/>
            <person name="Ward N.L."/>
            <person name="Angiuoli S.V."/>
            <person name="Crabtree J."/>
            <person name="Jones A.L."/>
            <person name="Durkin A.S."/>
            <person name="DeBoy R.T."/>
            <person name="Davidsen T.M."/>
            <person name="Mora M."/>
            <person name="Scarselli M."/>
            <person name="Margarit y Ros I."/>
            <person name="Peterson J.D."/>
            <person name="Hauser C.R."/>
            <person name="Sundaram J.P."/>
            <person name="Nelson W.C."/>
            <person name="Madupu R."/>
            <person name="Brinkac L.M."/>
            <person name="Dodson R.J."/>
            <person name="Rosovitz M.J."/>
            <person name="Sullivan S.A."/>
            <person name="Daugherty S.C."/>
            <person name="Haft D.H."/>
            <person name="Selengut J."/>
            <person name="Gwinn M.L."/>
            <person name="Zhou L."/>
            <person name="Zafar N."/>
            <person name="Khouri H."/>
            <person name="Radune D."/>
            <person name="Dimitrov G."/>
            <person name="Watkins K."/>
            <person name="O'Connor K.J."/>
            <person name="Smith S."/>
            <person name="Utterback T.R."/>
            <person name="White O."/>
            <person name="Rubens C.E."/>
            <person name="Grandi G."/>
            <person name="Madoff L.C."/>
            <person name="Kasper D.L."/>
            <person name="Telford J.L."/>
            <person name="Wessels M.R."/>
            <person name="Rappuoli R."/>
            <person name="Fraser C.M."/>
        </authorList>
    </citation>
    <scope>NUCLEOTIDE SEQUENCE [LARGE SCALE GENOMIC DNA]</scope>
    <source>
        <strain>ATCC 27591 / A909 / CDC SS700</strain>
    </source>
</reference>
<accession>Q3K0Z7</accession>
<sequence>MDKSIPKATAKRLSLYYRIFKRFNTDGIEKASSKQIADALGIDSATVRRDFSYFGELGRRGFGYDVKKLMNFFAEILNDHSTTNVMLVGCGNIGRALLHYRFHDRNKMQISMAFDLDSNDLVGKTTEDGIPVYGISTINDHLIDSDIETAILTVPSTEAQEVADILVKAGIKGILSFSPVHLTLPKDIIVQYVDLTSELQTLLYFMNQQQ</sequence>